<accession>P53511</accession>
<reference key="1">
    <citation type="submission" date="1994-01" db="EMBL/GenBank/DDBJ databases">
        <authorList>
            <person name="Wolf M.K."/>
            <person name="de Haan L.A.M."/>
            <person name="Cassels F.C."/>
            <person name="Willshaw G.A."/>
            <person name="Gestel E.C.M."/>
            <person name="Gaastra W."/>
            <person name="Warren R."/>
            <person name="Boedeker E.C."/>
        </authorList>
    </citation>
    <scope>NUCLEOTIDE SEQUENCE [GENOMIC DNA]</scope>
    <source>
        <strain>E8775</strain>
    </source>
</reference>
<feature type="signal peptide" evidence="1">
    <location>
        <begin position="1"/>
        <end position="21"/>
    </location>
</feature>
<feature type="chain" id="PRO_0000009185" description="CS6 fimbrial subunit B">
    <location>
        <begin position="22"/>
        <end position="167"/>
    </location>
</feature>
<dbReference type="EMBL" id="U04846">
    <property type="protein sequence ID" value="AAB51362.1"/>
    <property type="molecule type" value="Unassigned_DNA"/>
</dbReference>
<dbReference type="RefSeq" id="WP_001423176.1">
    <property type="nucleotide sequence ID" value="NZ_PNSK01000148.1"/>
</dbReference>
<dbReference type="SMR" id="P53511"/>
<dbReference type="GO" id="GO:0009289">
    <property type="term" value="C:pilus"/>
    <property type="evidence" value="ECO:0007669"/>
    <property type="project" value="UniProtKB-SubCell"/>
</dbReference>
<dbReference type="Gene3D" id="2.60.40.3480">
    <property type="match status" value="1"/>
</dbReference>
<dbReference type="InterPro" id="IPR031788">
    <property type="entry name" value="CssA/B"/>
</dbReference>
<dbReference type="InterPro" id="IPR053732">
    <property type="entry name" value="Fimbrial_Assembly_Comp"/>
</dbReference>
<dbReference type="Pfam" id="PF16831">
    <property type="entry name" value="CssAB"/>
    <property type="match status" value="1"/>
</dbReference>
<name>CSSB2_ECOLX</name>
<sequence>MLKKIISAIALIAGTSGVVNAGNWQYKSLDVNVNIEQNFIPDIDSAVRIIPVNYDSDPKLDSQLYTVEMTIPAGVSAVKIAPTDSLTSSGQQIGKLVNVNNPDQNMNYYIRKDSGAGNFMAGQKGSFPVKENTSYTFSAIYTGGEYPNSGYSSGTYAGNLTVSFYSN</sequence>
<organism>
    <name type="scientific">Escherichia coli</name>
    <dbReference type="NCBI Taxonomy" id="562"/>
    <lineage>
        <taxon>Bacteria</taxon>
        <taxon>Pseudomonadati</taxon>
        <taxon>Pseudomonadota</taxon>
        <taxon>Gammaproteobacteria</taxon>
        <taxon>Enterobacterales</taxon>
        <taxon>Enterobacteriaceae</taxon>
        <taxon>Escherichia</taxon>
    </lineage>
</organism>
<gene>
    <name type="primary">cssB</name>
</gene>
<protein>
    <recommendedName>
        <fullName>CS6 fimbrial subunit B</fullName>
    </recommendedName>
</protein>
<comment type="subcellular location">
    <subcellularLocation>
        <location evidence="2">Fimbrium</location>
    </subcellularLocation>
</comment>
<keyword id="KW-0281">Fimbrium</keyword>
<keyword id="KW-0732">Signal</keyword>
<proteinExistence type="inferred from homology"/>
<evidence type="ECO:0000255" key="1"/>
<evidence type="ECO:0000305" key="2"/>